<name>RSMJ_PSEE4</name>
<organism>
    <name type="scientific">Pseudomonas entomophila (strain L48)</name>
    <dbReference type="NCBI Taxonomy" id="384676"/>
    <lineage>
        <taxon>Bacteria</taxon>
        <taxon>Pseudomonadati</taxon>
        <taxon>Pseudomonadota</taxon>
        <taxon>Gammaproteobacteria</taxon>
        <taxon>Pseudomonadales</taxon>
        <taxon>Pseudomonadaceae</taxon>
        <taxon>Pseudomonas</taxon>
    </lineage>
</organism>
<evidence type="ECO:0000255" key="1">
    <source>
        <dbReference type="HAMAP-Rule" id="MF_01523"/>
    </source>
</evidence>
<gene>
    <name evidence="1" type="primary">rsmJ</name>
    <name type="ordered locus">PSEEN1271</name>
</gene>
<keyword id="KW-0963">Cytoplasm</keyword>
<keyword id="KW-0489">Methyltransferase</keyword>
<keyword id="KW-0698">rRNA processing</keyword>
<keyword id="KW-0949">S-adenosyl-L-methionine</keyword>
<keyword id="KW-0808">Transferase</keyword>
<sequence length="260" mass="27951">MAEQEQGTGIRVEALAPEFQAQAQAWAQRLGLPMTDDEAGFAVQVGVDGLQVQQLGPQAPGPVRVDFVEGQAAHRRLYGGGSGQMIAKAVGIAQGVRPQVLDATAGLGKDAFVLASLGCQMTLIERQPLIAALLEDGLARARGDLEVGGIVERMRLLTGNAIERMRAWEGEAPQVIYLDPMFPHRDKSALVKKEMRVFRPLVGDDLDAPALLEAALALASHRVVVKRPRKAPIIEGVKPSHSLEGKSSRYDIYPKKALKG</sequence>
<comment type="function">
    <text evidence="1">Specifically methylates the guanosine in position 1516 of 16S rRNA.</text>
</comment>
<comment type="catalytic activity">
    <reaction evidence="1">
        <text>guanosine(1516) in 16S rRNA + S-adenosyl-L-methionine = N(2)-methylguanosine(1516) in 16S rRNA + S-adenosyl-L-homocysteine + H(+)</text>
        <dbReference type="Rhea" id="RHEA:43220"/>
        <dbReference type="Rhea" id="RHEA-COMP:10412"/>
        <dbReference type="Rhea" id="RHEA-COMP:10413"/>
        <dbReference type="ChEBI" id="CHEBI:15378"/>
        <dbReference type="ChEBI" id="CHEBI:57856"/>
        <dbReference type="ChEBI" id="CHEBI:59789"/>
        <dbReference type="ChEBI" id="CHEBI:74269"/>
        <dbReference type="ChEBI" id="CHEBI:74481"/>
        <dbReference type="EC" id="2.1.1.242"/>
    </reaction>
</comment>
<comment type="subcellular location">
    <subcellularLocation>
        <location evidence="1">Cytoplasm</location>
    </subcellularLocation>
</comment>
<comment type="similarity">
    <text evidence="1">Belongs to the methyltransferase superfamily. RsmJ family.</text>
</comment>
<proteinExistence type="inferred from homology"/>
<feature type="chain" id="PRO_0000292641" description="Ribosomal RNA small subunit methyltransferase J">
    <location>
        <begin position="1"/>
        <end position="260"/>
    </location>
</feature>
<feature type="binding site" evidence="1">
    <location>
        <begin position="125"/>
        <end position="126"/>
    </location>
    <ligand>
        <name>S-adenosyl-L-methionine</name>
        <dbReference type="ChEBI" id="CHEBI:59789"/>
    </ligand>
</feature>
<feature type="binding site" evidence="1">
    <location>
        <position position="179"/>
    </location>
    <ligand>
        <name>S-adenosyl-L-methionine</name>
        <dbReference type="ChEBI" id="CHEBI:59789"/>
    </ligand>
</feature>
<accession>Q1IDU5</accession>
<dbReference type="EC" id="2.1.1.242" evidence="1"/>
<dbReference type="EMBL" id="CT573326">
    <property type="protein sequence ID" value="CAK14164.1"/>
    <property type="molecule type" value="Genomic_DNA"/>
</dbReference>
<dbReference type="RefSeq" id="WP_011532580.1">
    <property type="nucleotide sequence ID" value="NC_008027.1"/>
</dbReference>
<dbReference type="SMR" id="Q1IDU5"/>
<dbReference type="STRING" id="384676.PSEEN1271"/>
<dbReference type="GeneID" id="32804548"/>
<dbReference type="KEGG" id="pen:PSEEN1271"/>
<dbReference type="eggNOG" id="COG0742">
    <property type="taxonomic scope" value="Bacteria"/>
</dbReference>
<dbReference type="HOGENOM" id="CLU_076324_0_1_6"/>
<dbReference type="OrthoDB" id="3191794at2"/>
<dbReference type="Proteomes" id="UP000000658">
    <property type="component" value="Chromosome"/>
</dbReference>
<dbReference type="GO" id="GO:0005737">
    <property type="term" value="C:cytoplasm"/>
    <property type="evidence" value="ECO:0007669"/>
    <property type="project" value="UniProtKB-SubCell"/>
</dbReference>
<dbReference type="GO" id="GO:0008990">
    <property type="term" value="F:rRNA (guanine-N2-)-methyltransferase activity"/>
    <property type="evidence" value="ECO:0007669"/>
    <property type="project" value="UniProtKB-UniRule"/>
</dbReference>
<dbReference type="Gene3D" id="3.40.50.150">
    <property type="entry name" value="Vaccinia Virus protein VP39"/>
    <property type="match status" value="1"/>
</dbReference>
<dbReference type="HAMAP" id="MF_01523">
    <property type="entry name" value="16SrRNA_methyltr_J"/>
    <property type="match status" value="1"/>
</dbReference>
<dbReference type="InterPro" id="IPR007536">
    <property type="entry name" value="16SrRNA_methylTrfase_J"/>
</dbReference>
<dbReference type="InterPro" id="IPR029063">
    <property type="entry name" value="SAM-dependent_MTases_sf"/>
</dbReference>
<dbReference type="PANTHER" id="PTHR36112">
    <property type="entry name" value="RIBOSOMAL RNA SMALL SUBUNIT METHYLTRANSFERASE J"/>
    <property type="match status" value="1"/>
</dbReference>
<dbReference type="PANTHER" id="PTHR36112:SF1">
    <property type="entry name" value="RIBOSOMAL RNA SMALL SUBUNIT METHYLTRANSFERASE J"/>
    <property type="match status" value="1"/>
</dbReference>
<dbReference type="Pfam" id="PF04445">
    <property type="entry name" value="SAM_MT"/>
    <property type="match status" value="1"/>
</dbReference>
<dbReference type="SUPFAM" id="SSF53335">
    <property type="entry name" value="S-adenosyl-L-methionine-dependent methyltransferases"/>
    <property type="match status" value="1"/>
</dbReference>
<reference key="1">
    <citation type="journal article" date="2006" name="Nat. Biotechnol.">
        <title>Complete genome sequence of the entomopathogenic and metabolically versatile soil bacterium Pseudomonas entomophila.</title>
        <authorList>
            <person name="Vodovar N."/>
            <person name="Vallenet D."/>
            <person name="Cruveiller S."/>
            <person name="Rouy Z."/>
            <person name="Barbe V."/>
            <person name="Acosta C."/>
            <person name="Cattolico L."/>
            <person name="Jubin C."/>
            <person name="Lajus A."/>
            <person name="Segurens B."/>
            <person name="Vacherie B."/>
            <person name="Wincker P."/>
            <person name="Weissenbach J."/>
            <person name="Lemaitre B."/>
            <person name="Medigue C."/>
            <person name="Boccard F."/>
        </authorList>
    </citation>
    <scope>NUCLEOTIDE SEQUENCE [LARGE SCALE GENOMIC DNA]</scope>
    <source>
        <strain>L48</strain>
    </source>
</reference>
<protein>
    <recommendedName>
        <fullName evidence="1">Ribosomal RNA small subunit methyltransferase J</fullName>
        <ecNumber evidence="1">2.1.1.242</ecNumber>
    </recommendedName>
    <alternativeName>
        <fullName evidence="1">16S rRNA m2G1516 methyltransferase</fullName>
    </alternativeName>
    <alternativeName>
        <fullName evidence="1">rRNA (guanine-N(2)-)-methyltransferase</fullName>
    </alternativeName>
</protein>